<sequence>MSFFSHHPSRSPRIWTDILLRWQGSVIPAIASRVLVCMAFSLGVTLVDGWGYKFSIPIQESIVPSIVLGLLLVFRTNTAYERFWEGRKAWGTMVNTIRNLSRIIWVSVAEPSPQAHQDKIKILHLLVAFAVATKLHLRSQPLNEEIWALLPESGYRKLEDLNNPPLEIAFWISNYLQREYDQNNINAYQLTAMLRLVDTMVDVLGSCERILKTPIPLAYAIHLRQLIFLYCFITPFQIVNTLHWATAFVVGIIAFTVFGIEEIGVEIENPFGHDANDLPLDQICQTMQANLEDLIQLPPWHQISHGD</sequence>
<reference key="1">
    <citation type="journal article" date="1996" name="DNA Res.">
        <title>Sequence analysis of the genome of the unicellular cyanobacterium Synechocystis sp. strain PCC6803. II. Sequence determination of the entire genome and assignment of potential protein-coding regions.</title>
        <authorList>
            <person name="Kaneko T."/>
            <person name="Sato S."/>
            <person name="Kotani H."/>
            <person name="Tanaka A."/>
            <person name="Asamizu E."/>
            <person name="Nakamura Y."/>
            <person name="Miyajima N."/>
            <person name="Hirosawa M."/>
            <person name="Sugiura M."/>
            <person name="Sasamoto S."/>
            <person name="Kimura T."/>
            <person name="Hosouchi T."/>
            <person name="Matsuno A."/>
            <person name="Muraki A."/>
            <person name="Nakazaki N."/>
            <person name="Naruo K."/>
            <person name="Okumura S."/>
            <person name="Shimpo S."/>
            <person name="Takeuchi C."/>
            <person name="Wada T."/>
            <person name="Watanabe A."/>
            <person name="Yamada M."/>
            <person name="Yasuda M."/>
            <person name="Tabata S."/>
        </authorList>
    </citation>
    <scope>NUCLEOTIDE SEQUENCE [LARGE SCALE GENOMIC DNA]</scope>
    <source>
        <strain>ATCC 27184 / PCC 6803 / Kazusa</strain>
    </source>
</reference>
<keyword id="KW-1003">Cell membrane</keyword>
<keyword id="KW-0406">Ion transport</keyword>
<keyword id="KW-0472">Membrane</keyword>
<keyword id="KW-1185">Reference proteome</keyword>
<keyword id="KW-0812">Transmembrane</keyword>
<keyword id="KW-1133">Transmembrane helix</keyword>
<keyword id="KW-0813">Transport</keyword>
<comment type="subcellular location">
    <subcellularLocation>
        <location evidence="1">Cell membrane</location>
        <topology evidence="1">Multi-pass membrane protein</topology>
    </subcellularLocation>
</comment>
<comment type="similarity">
    <text evidence="2">Belongs to the anion channel-forming bestrophin (TC 1.A.46) family.</text>
</comment>
<comment type="sequence caution" evidence="2">
    <conflict type="erroneous initiation">
        <sequence resource="EMBL-CDS" id="BAA16943"/>
    </conflict>
</comment>
<dbReference type="EMBL" id="BA000022">
    <property type="protein sequence ID" value="BAA16943.1"/>
    <property type="status" value="ALT_INIT"/>
    <property type="molecule type" value="Genomic_DNA"/>
</dbReference>
<dbReference type="PIR" id="S74792">
    <property type="entry name" value="S74792"/>
</dbReference>
<dbReference type="SMR" id="P72926"/>
<dbReference type="STRING" id="1148.gene:10497803"/>
<dbReference type="PaxDb" id="1148-1652017"/>
<dbReference type="EnsemblBacteria" id="BAA16943">
    <property type="protein sequence ID" value="BAA16943"/>
    <property type="gene ID" value="BAA16943"/>
</dbReference>
<dbReference type="KEGG" id="syn:sll1024"/>
<dbReference type="eggNOG" id="COG3781">
    <property type="taxonomic scope" value="Bacteria"/>
</dbReference>
<dbReference type="InParanoid" id="P72926"/>
<dbReference type="PhylomeDB" id="P72926"/>
<dbReference type="Proteomes" id="UP000001425">
    <property type="component" value="Chromosome"/>
</dbReference>
<dbReference type="GO" id="GO:0005886">
    <property type="term" value="C:plasma membrane"/>
    <property type="evidence" value="ECO:0007669"/>
    <property type="project" value="UniProtKB-SubCell"/>
</dbReference>
<dbReference type="GO" id="GO:0005254">
    <property type="term" value="F:chloride channel activity"/>
    <property type="evidence" value="ECO:0007669"/>
    <property type="project" value="InterPro"/>
</dbReference>
<dbReference type="InterPro" id="IPR021134">
    <property type="entry name" value="Bestrophin-like"/>
</dbReference>
<dbReference type="InterPro" id="IPR044669">
    <property type="entry name" value="YneE/VCCN1/2-like"/>
</dbReference>
<dbReference type="PANTHER" id="PTHR33281">
    <property type="entry name" value="UPF0187 PROTEIN YNEE"/>
    <property type="match status" value="1"/>
</dbReference>
<dbReference type="PANTHER" id="PTHR33281:SF19">
    <property type="entry name" value="VOLTAGE-DEPENDENT ANION CHANNEL-FORMING PROTEIN YNEE"/>
    <property type="match status" value="1"/>
</dbReference>
<dbReference type="Pfam" id="PF01062">
    <property type="entry name" value="Bestrophin"/>
    <property type="match status" value="1"/>
</dbReference>
<name>Y1024_SYNY3</name>
<proteinExistence type="inferred from homology"/>
<evidence type="ECO:0000255" key="1"/>
<evidence type="ECO:0000305" key="2"/>
<gene>
    <name type="ordered locus">sll1024</name>
</gene>
<protein>
    <recommendedName>
        <fullName>Voltage-dependent anion channel-forming protein sll1024</fullName>
    </recommendedName>
</protein>
<organism>
    <name type="scientific">Synechocystis sp. (strain ATCC 27184 / PCC 6803 / Kazusa)</name>
    <dbReference type="NCBI Taxonomy" id="1111708"/>
    <lineage>
        <taxon>Bacteria</taxon>
        <taxon>Bacillati</taxon>
        <taxon>Cyanobacteriota</taxon>
        <taxon>Cyanophyceae</taxon>
        <taxon>Synechococcales</taxon>
        <taxon>Merismopediaceae</taxon>
        <taxon>Synechocystis</taxon>
    </lineage>
</organism>
<accession>P72926</accession>
<feature type="chain" id="PRO_0000217670" description="Voltage-dependent anion channel-forming protein sll1024">
    <location>
        <begin position="1"/>
        <end position="307"/>
    </location>
</feature>
<feature type="transmembrane region" description="Helical" evidence="1">
    <location>
        <begin position="26"/>
        <end position="46"/>
    </location>
</feature>
<feature type="transmembrane region" description="Helical" evidence="1">
    <location>
        <begin position="54"/>
        <end position="74"/>
    </location>
</feature>
<feature type="transmembrane region" description="Helical" evidence="1">
    <location>
        <begin position="226"/>
        <end position="246"/>
    </location>
</feature>
<feature type="transmembrane region" description="Helical" evidence="1">
    <location>
        <begin position="247"/>
        <end position="267"/>
    </location>
</feature>